<evidence type="ECO:0000255" key="1">
    <source>
        <dbReference type="HAMAP-Rule" id="MF_01629"/>
    </source>
</evidence>
<sequence length="218" mass="25499">MSDNDQLQQIAHLRREYTKGGLRRRDLPAEPLTLFERWLGQACDARLADPTAMVVATVDDKGQPYQRIVLLKHYDEKGLVFYTNLGSRKAHQIEHNPRISLLFPWHMLERQVMVTGKAERLSTLEVVRYFHSRPRDSQIGAWVSKQSSRISARGILESKFLELKQKFQQGEVPLPSFWGGFRVSIEQMEFWQGGEHRLHDRFLYQRDDGAWKIDRLAP</sequence>
<comment type="function">
    <text evidence="1">Catalyzes the oxidation of either pyridoxine 5'-phosphate (PNP) or pyridoxamine 5'-phosphate (PMP) into pyridoxal 5'-phosphate (PLP).</text>
</comment>
<comment type="catalytic activity">
    <reaction evidence="1">
        <text>pyridoxamine 5'-phosphate + O2 + H2O = pyridoxal 5'-phosphate + H2O2 + NH4(+)</text>
        <dbReference type="Rhea" id="RHEA:15817"/>
        <dbReference type="ChEBI" id="CHEBI:15377"/>
        <dbReference type="ChEBI" id="CHEBI:15379"/>
        <dbReference type="ChEBI" id="CHEBI:16240"/>
        <dbReference type="ChEBI" id="CHEBI:28938"/>
        <dbReference type="ChEBI" id="CHEBI:58451"/>
        <dbReference type="ChEBI" id="CHEBI:597326"/>
        <dbReference type="EC" id="1.4.3.5"/>
    </reaction>
</comment>
<comment type="catalytic activity">
    <reaction evidence="1">
        <text>pyridoxine 5'-phosphate + O2 = pyridoxal 5'-phosphate + H2O2</text>
        <dbReference type="Rhea" id="RHEA:15149"/>
        <dbReference type="ChEBI" id="CHEBI:15379"/>
        <dbReference type="ChEBI" id="CHEBI:16240"/>
        <dbReference type="ChEBI" id="CHEBI:58589"/>
        <dbReference type="ChEBI" id="CHEBI:597326"/>
        <dbReference type="EC" id="1.4.3.5"/>
    </reaction>
</comment>
<comment type="cofactor">
    <cofactor evidence="1">
        <name>FMN</name>
        <dbReference type="ChEBI" id="CHEBI:58210"/>
    </cofactor>
    <text evidence="1">Binds 1 FMN per subunit.</text>
</comment>
<comment type="pathway">
    <text evidence="1">Cofactor metabolism; pyridoxal 5'-phosphate salvage; pyridoxal 5'-phosphate from pyridoxamine 5'-phosphate: step 1/1.</text>
</comment>
<comment type="pathway">
    <text evidence="1">Cofactor metabolism; pyridoxal 5'-phosphate salvage; pyridoxal 5'-phosphate from pyridoxine 5'-phosphate: step 1/1.</text>
</comment>
<comment type="subunit">
    <text evidence="1">Homodimer.</text>
</comment>
<comment type="similarity">
    <text evidence="1">Belongs to the pyridoxamine 5'-phosphate oxidase family.</text>
</comment>
<proteinExistence type="inferred from homology"/>
<feature type="chain" id="PRO_1000186338" description="Pyridoxine/pyridoxamine 5'-phosphate oxidase">
    <location>
        <begin position="1"/>
        <end position="218"/>
    </location>
</feature>
<feature type="binding site" evidence="1">
    <location>
        <begin position="14"/>
        <end position="17"/>
    </location>
    <ligand>
        <name>substrate</name>
    </ligand>
</feature>
<feature type="binding site" evidence="1">
    <location>
        <begin position="67"/>
        <end position="72"/>
    </location>
    <ligand>
        <name>FMN</name>
        <dbReference type="ChEBI" id="CHEBI:58210"/>
    </ligand>
</feature>
<feature type="binding site" evidence="1">
    <location>
        <position position="72"/>
    </location>
    <ligand>
        <name>substrate</name>
    </ligand>
</feature>
<feature type="binding site" evidence="1">
    <location>
        <begin position="82"/>
        <end position="83"/>
    </location>
    <ligand>
        <name>FMN</name>
        <dbReference type="ChEBI" id="CHEBI:58210"/>
    </ligand>
</feature>
<feature type="binding site" evidence="1">
    <location>
        <position position="88"/>
    </location>
    <ligand>
        <name>FMN</name>
        <dbReference type="ChEBI" id="CHEBI:58210"/>
    </ligand>
</feature>
<feature type="binding site" evidence="1">
    <location>
        <position position="89"/>
    </location>
    <ligand>
        <name>FMN</name>
        <dbReference type="ChEBI" id="CHEBI:58210"/>
    </ligand>
</feature>
<feature type="binding site" evidence="1">
    <location>
        <position position="111"/>
    </location>
    <ligand>
        <name>FMN</name>
        <dbReference type="ChEBI" id="CHEBI:58210"/>
    </ligand>
</feature>
<feature type="binding site" evidence="1">
    <location>
        <position position="129"/>
    </location>
    <ligand>
        <name>substrate</name>
    </ligand>
</feature>
<feature type="binding site" evidence="1">
    <location>
        <position position="133"/>
    </location>
    <ligand>
        <name>substrate</name>
    </ligand>
</feature>
<feature type="binding site" evidence="1">
    <location>
        <position position="137"/>
    </location>
    <ligand>
        <name>substrate</name>
    </ligand>
</feature>
<feature type="binding site" evidence="1">
    <location>
        <begin position="146"/>
        <end position="147"/>
    </location>
    <ligand>
        <name>FMN</name>
        <dbReference type="ChEBI" id="CHEBI:58210"/>
    </ligand>
</feature>
<feature type="binding site" evidence="1">
    <location>
        <position position="191"/>
    </location>
    <ligand>
        <name>FMN</name>
        <dbReference type="ChEBI" id="CHEBI:58210"/>
    </ligand>
</feature>
<feature type="binding site" evidence="1">
    <location>
        <begin position="197"/>
        <end position="199"/>
    </location>
    <ligand>
        <name>substrate</name>
    </ligand>
</feature>
<feature type="binding site" evidence="1">
    <location>
        <position position="201"/>
    </location>
    <ligand>
        <name>FMN</name>
        <dbReference type="ChEBI" id="CHEBI:58210"/>
    </ligand>
</feature>
<gene>
    <name evidence="1" type="primary">pdxH</name>
    <name type="ordered locus">SPC_2283</name>
</gene>
<protein>
    <recommendedName>
        <fullName evidence="1">Pyridoxine/pyridoxamine 5'-phosphate oxidase</fullName>
        <ecNumber evidence="1">1.4.3.5</ecNumber>
    </recommendedName>
    <alternativeName>
        <fullName evidence="1">PNP/PMP oxidase</fullName>
        <shortName evidence="1">PNPOx</shortName>
    </alternativeName>
    <alternativeName>
        <fullName evidence="1">Pyridoxal 5'-phosphate synthase</fullName>
    </alternativeName>
</protein>
<accession>C0Q5T4</accession>
<organism>
    <name type="scientific">Salmonella paratyphi C (strain RKS4594)</name>
    <dbReference type="NCBI Taxonomy" id="476213"/>
    <lineage>
        <taxon>Bacteria</taxon>
        <taxon>Pseudomonadati</taxon>
        <taxon>Pseudomonadota</taxon>
        <taxon>Gammaproteobacteria</taxon>
        <taxon>Enterobacterales</taxon>
        <taxon>Enterobacteriaceae</taxon>
        <taxon>Salmonella</taxon>
    </lineage>
</organism>
<keyword id="KW-0285">Flavoprotein</keyword>
<keyword id="KW-0288">FMN</keyword>
<keyword id="KW-0560">Oxidoreductase</keyword>
<keyword id="KW-0664">Pyridoxine biosynthesis</keyword>
<reference key="1">
    <citation type="journal article" date="2009" name="PLoS ONE">
        <title>Salmonella paratyphi C: genetic divergence from Salmonella choleraesuis and pathogenic convergence with Salmonella typhi.</title>
        <authorList>
            <person name="Liu W.-Q."/>
            <person name="Feng Y."/>
            <person name="Wang Y."/>
            <person name="Zou Q.-H."/>
            <person name="Chen F."/>
            <person name="Guo J.-T."/>
            <person name="Peng Y.-H."/>
            <person name="Jin Y."/>
            <person name="Li Y.-G."/>
            <person name="Hu S.-N."/>
            <person name="Johnston R.N."/>
            <person name="Liu G.-R."/>
            <person name="Liu S.-L."/>
        </authorList>
    </citation>
    <scope>NUCLEOTIDE SEQUENCE [LARGE SCALE GENOMIC DNA]</scope>
    <source>
        <strain>RKS4594</strain>
    </source>
</reference>
<name>PDXH_SALPC</name>
<dbReference type="EC" id="1.4.3.5" evidence="1"/>
<dbReference type="EMBL" id="CP000857">
    <property type="protein sequence ID" value="ACN46400.1"/>
    <property type="molecule type" value="Genomic_DNA"/>
</dbReference>
<dbReference type="RefSeq" id="WP_001282334.1">
    <property type="nucleotide sequence ID" value="NC_012125.1"/>
</dbReference>
<dbReference type="SMR" id="C0Q5T4"/>
<dbReference type="KEGG" id="sei:SPC_2283"/>
<dbReference type="HOGENOM" id="CLU_032263_2_2_6"/>
<dbReference type="UniPathway" id="UPA01068">
    <property type="reaction ID" value="UER00304"/>
</dbReference>
<dbReference type="UniPathway" id="UPA01068">
    <property type="reaction ID" value="UER00305"/>
</dbReference>
<dbReference type="Proteomes" id="UP000001599">
    <property type="component" value="Chromosome"/>
</dbReference>
<dbReference type="GO" id="GO:0010181">
    <property type="term" value="F:FMN binding"/>
    <property type="evidence" value="ECO:0007669"/>
    <property type="project" value="UniProtKB-UniRule"/>
</dbReference>
<dbReference type="GO" id="GO:0004733">
    <property type="term" value="F:pyridoxamine phosphate oxidase activity"/>
    <property type="evidence" value="ECO:0007669"/>
    <property type="project" value="UniProtKB-UniRule"/>
</dbReference>
<dbReference type="GO" id="GO:0008615">
    <property type="term" value="P:pyridoxine biosynthetic process"/>
    <property type="evidence" value="ECO:0007669"/>
    <property type="project" value="UniProtKB-KW"/>
</dbReference>
<dbReference type="FunFam" id="2.30.110.10:FF:000001">
    <property type="entry name" value="Pyridoxine/pyridoxamine 5'-phosphate oxidase"/>
    <property type="match status" value="1"/>
</dbReference>
<dbReference type="Gene3D" id="2.30.110.10">
    <property type="entry name" value="Electron Transport, Fmn-binding Protein, Chain A"/>
    <property type="match status" value="1"/>
</dbReference>
<dbReference type="HAMAP" id="MF_01629">
    <property type="entry name" value="PdxH"/>
    <property type="match status" value="1"/>
</dbReference>
<dbReference type="InterPro" id="IPR000659">
    <property type="entry name" value="Pyridox_Oxase"/>
</dbReference>
<dbReference type="InterPro" id="IPR019740">
    <property type="entry name" value="Pyridox_Oxase_CS"/>
</dbReference>
<dbReference type="InterPro" id="IPR011576">
    <property type="entry name" value="Pyridox_Oxase_N"/>
</dbReference>
<dbReference type="InterPro" id="IPR019576">
    <property type="entry name" value="Pyridoxamine_oxidase_dimer_C"/>
</dbReference>
<dbReference type="InterPro" id="IPR012349">
    <property type="entry name" value="Split_barrel_FMN-bd"/>
</dbReference>
<dbReference type="NCBIfam" id="TIGR00558">
    <property type="entry name" value="pdxH"/>
    <property type="match status" value="1"/>
</dbReference>
<dbReference type="NCBIfam" id="NF004231">
    <property type="entry name" value="PRK05679.1"/>
    <property type="match status" value="1"/>
</dbReference>
<dbReference type="PANTHER" id="PTHR10851:SF0">
    <property type="entry name" value="PYRIDOXINE-5'-PHOSPHATE OXIDASE"/>
    <property type="match status" value="1"/>
</dbReference>
<dbReference type="PANTHER" id="PTHR10851">
    <property type="entry name" value="PYRIDOXINE-5-PHOSPHATE OXIDASE"/>
    <property type="match status" value="1"/>
</dbReference>
<dbReference type="Pfam" id="PF10590">
    <property type="entry name" value="PNP_phzG_C"/>
    <property type="match status" value="1"/>
</dbReference>
<dbReference type="Pfam" id="PF01243">
    <property type="entry name" value="PNPOx_N"/>
    <property type="match status" value="1"/>
</dbReference>
<dbReference type="PIRSF" id="PIRSF000190">
    <property type="entry name" value="Pyd_amn-ph_oxd"/>
    <property type="match status" value="1"/>
</dbReference>
<dbReference type="SUPFAM" id="SSF50475">
    <property type="entry name" value="FMN-binding split barrel"/>
    <property type="match status" value="1"/>
</dbReference>
<dbReference type="PROSITE" id="PS01064">
    <property type="entry name" value="PYRIDOX_OXIDASE"/>
    <property type="match status" value="1"/>
</dbReference>